<keyword id="KW-0456">Lyase</keyword>
<keyword id="KW-0460">Magnesium</keyword>
<keyword id="KW-0464">Manganese</keyword>
<keyword id="KW-0479">Metal-binding</keyword>
<keyword id="KW-1185">Reference proteome</keyword>
<keyword id="KW-0686">Riboflavin biosynthesis</keyword>
<proteinExistence type="inferred from homology"/>
<accession>B7LGI1</accession>
<feature type="chain" id="PRO_1000193755" description="3,4-dihydroxy-2-butanone 4-phosphate synthase">
    <location>
        <begin position="1"/>
        <end position="217"/>
    </location>
</feature>
<feature type="binding site" evidence="1">
    <location>
        <begin position="37"/>
        <end position="38"/>
    </location>
    <ligand>
        <name>D-ribulose 5-phosphate</name>
        <dbReference type="ChEBI" id="CHEBI:58121"/>
    </ligand>
</feature>
<feature type="binding site" evidence="1">
    <location>
        <position position="38"/>
    </location>
    <ligand>
        <name>Mg(2+)</name>
        <dbReference type="ChEBI" id="CHEBI:18420"/>
        <label>1</label>
    </ligand>
</feature>
<feature type="binding site" evidence="1">
    <location>
        <position position="38"/>
    </location>
    <ligand>
        <name>Mg(2+)</name>
        <dbReference type="ChEBI" id="CHEBI:18420"/>
        <label>2</label>
    </ligand>
</feature>
<feature type="binding site" evidence="1">
    <location>
        <position position="42"/>
    </location>
    <ligand>
        <name>D-ribulose 5-phosphate</name>
        <dbReference type="ChEBI" id="CHEBI:58121"/>
    </ligand>
</feature>
<feature type="binding site" evidence="1">
    <location>
        <begin position="150"/>
        <end position="154"/>
    </location>
    <ligand>
        <name>D-ribulose 5-phosphate</name>
        <dbReference type="ChEBI" id="CHEBI:58121"/>
    </ligand>
</feature>
<feature type="binding site" evidence="1">
    <location>
        <position position="153"/>
    </location>
    <ligand>
        <name>Mg(2+)</name>
        <dbReference type="ChEBI" id="CHEBI:18420"/>
        <label>2</label>
    </ligand>
</feature>
<feature type="binding site" evidence="1">
    <location>
        <position position="174"/>
    </location>
    <ligand>
        <name>D-ribulose 5-phosphate</name>
        <dbReference type="ChEBI" id="CHEBI:58121"/>
    </ligand>
</feature>
<feature type="site" description="Essential for catalytic activity" evidence="1">
    <location>
        <position position="136"/>
    </location>
</feature>
<feature type="site" description="Essential for catalytic activity" evidence="1">
    <location>
        <position position="174"/>
    </location>
</feature>
<sequence length="217" mass="23353">MNQTLLSSFGTPFERVENALAALREGRGVMVLDDEDRENEGDMIFPAETMTVEQMALTIRHGSGIVCLCITEDRRKQLDLPMMVENNTSAYGTGFTVTIEAAEGVTTGVSAADRITTVRAAIADGAKPSDLNRPGHVFPLRAQAGGVLTRGGHTEATIDLMTLAGFKPAGVLCELTNDDGTMARAPECIEFANKHNMALVTIEDLVAYRQAHERKAS</sequence>
<comment type="function">
    <text evidence="1">Catalyzes the conversion of D-ribulose 5-phosphate to formate and 3,4-dihydroxy-2-butanone 4-phosphate.</text>
</comment>
<comment type="catalytic activity">
    <reaction evidence="1">
        <text>D-ribulose 5-phosphate = (2S)-2-hydroxy-3-oxobutyl phosphate + formate + H(+)</text>
        <dbReference type="Rhea" id="RHEA:18457"/>
        <dbReference type="ChEBI" id="CHEBI:15378"/>
        <dbReference type="ChEBI" id="CHEBI:15740"/>
        <dbReference type="ChEBI" id="CHEBI:58121"/>
        <dbReference type="ChEBI" id="CHEBI:58830"/>
        <dbReference type="EC" id="4.1.99.12"/>
    </reaction>
</comment>
<comment type="cofactor">
    <cofactor evidence="1">
        <name>Mg(2+)</name>
        <dbReference type="ChEBI" id="CHEBI:18420"/>
    </cofactor>
    <cofactor evidence="1">
        <name>Mn(2+)</name>
        <dbReference type="ChEBI" id="CHEBI:29035"/>
    </cofactor>
    <text evidence="1">Binds 2 divalent metal cations per subunit. Magnesium or manganese.</text>
</comment>
<comment type="pathway">
    <text evidence="1">Cofactor biosynthesis; riboflavin biosynthesis; 2-hydroxy-3-oxobutyl phosphate from D-ribulose 5-phosphate: step 1/1.</text>
</comment>
<comment type="subunit">
    <text evidence="1">Homodimer.</text>
</comment>
<comment type="similarity">
    <text evidence="1">Belongs to the DHBP synthase family.</text>
</comment>
<dbReference type="EC" id="4.1.99.12" evidence="1"/>
<dbReference type="EMBL" id="CU928145">
    <property type="protein sequence ID" value="CAU99585.1"/>
    <property type="molecule type" value="Genomic_DNA"/>
</dbReference>
<dbReference type="RefSeq" id="WP_001076997.1">
    <property type="nucleotide sequence ID" value="NC_011748.1"/>
</dbReference>
<dbReference type="SMR" id="B7LGI1"/>
<dbReference type="GeneID" id="93778953"/>
<dbReference type="KEGG" id="eck:EC55989_3457"/>
<dbReference type="HOGENOM" id="CLU_020273_3_0_6"/>
<dbReference type="UniPathway" id="UPA00275">
    <property type="reaction ID" value="UER00399"/>
</dbReference>
<dbReference type="Proteomes" id="UP000000746">
    <property type="component" value="Chromosome"/>
</dbReference>
<dbReference type="GO" id="GO:0005829">
    <property type="term" value="C:cytosol"/>
    <property type="evidence" value="ECO:0007669"/>
    <property type="project" value="TreeGrafter"/>
</dbReference>
<dbReference type="GO" id="GO:0008686">
    <property type="term" value="F:3,4-dihydroxy-2-butanone-4-phosphate synthase activity"/>
    <property type="evidence" value="ECO:0007669"/>
    <property type="project" value="UniProtKB-UniRule"/>
</dbReference>
<dbReference type="GO" id="GO:0000287">
    <property type="term" value="F:magnesium ion binding"/>
    <property type="evidence" value="ECO:0007669"/>
    <property type="project" value="UniProtKB-UniRule"/>
</dbReference>
<dbReference type="GO" id="GO:0030145">
    <property type="term" value="F:manganese ion binding"/>
    <property type="evidence" value="ECO:0007669"/>
    <property type="project" value="UniProtKB-UniRule"/>
</dbReference>
<dbReference type="GO" id="GO:0009231">
    <property type="term" value="P:riboflavin biosynthetic process"/>
    <property type="evidence" value="ECO:0007669"/>
    <property type="project" value="UniProtKB-UniRule"/>
</dbReference>
<dbReference type="FunFam" id="3.90.870.10:FF:000002">
    <property type="entry name" value="3,4-dihydroxy-2-butanone 4-phosphate synthase"/>
    <property type="match status" value="1"/>
</dbReference>
<dbReference type="Gene3D" id="3.90.870.10">
    <property type="entry name" value="DHBP synthase"/>
    <property type="match status" value="1"/>
</dbReference>
<dbReference type="HAMAP" id="MF_00180">
    <property type="entry name" value="RibB"/>
    <property type="match status" value="1"/>
</dbReference>
<dbReference type="InterPro" id="IPR017945">
    <property type="entry name" value="DHBP_synth_RibB-like_a/b_dom"/>
</dbReference>
<dbReference type="InterPro" id="IPR000422">
    <property type="entry name" value="DHBP_synthase_RibB"/>
</dbReference>
<dbReference type="NCBIfam" id="TIGR00506">
    <property type="entry name" value="ribB"/>
    <property type="match status" value="1"/>
</dbReference>
<dbReference type="PANTHER" id="PTHR21327:SF38">
    <property type="entry name" value="3,4-DIHYDROXY-2-BUTANONE 4-PHOSPHATE SYNTHASE"/>
    <property type="match status" value="1"/>
</dbReference>
<dbReference type="PANTHER" id="PTHR21327">
    <property type="entry name" value="GTP CYCLOHYDROLASE II-RELATED"/>
    <property type="match status" value="1"/>
</dbReference>
<dbReference type="Pfam" id="PF00926">
    <property type="entry name" value="DHBP_synthase"/>
    <property type="match status" value="1"/>
</dbReference>
<dbReference type="SUPFAM" id="SSF55821">
    <property type="entry name" value="YrdC/RibB"/>
    <property type="match status" value="1"/>
</dbReference>
<organism>
    <name type="scientific">Escherichia coli (strain 55989 / EAEC)</name>
    <dbReference type="NCBI Taxonomy" id="585055"/>
    <lineage>
        <taxon>Bacteria</taxon>
        <taxon>Pseudomonadati</taxon>
        <taxon>Pseudomonadota</taxon>
        <taxon>Gammaproteobacteria</taxon>
        <taxon>Enterobacterales</taxon>
        <taxon>Enterobacteriaceae</taxon>
        <taxon>Escherichia</taxon>
    </lineage>
</organism>
<reference key="1">
    <citation type="journal article" date="2009" name="PLoS Genet.">
        <title>Organised genome dynamics in the Escherichia coli species results in highly diverse adaptive paths.</title>
        <authorList>
            <person name="Touchon M."/>
            <person name="Hoede C."/>
            <person name="Tenaillon O."/>
            <person name="Barbe V."/>
            <person name="Baeriswyl S."/>
            <person name="Bidet P."/>
            <person name="Bingen E."/>
            <person name="Bonacorsi S."/>
            <person name="Bouchier C."/>
            <person name="Bouvet O."/>
            <person name="Calteau A."/>
            <person name="Chiapello H."/>
            <person name="Clermont O."/>
            <person name="Cruveiller S."/>
            <person name="Danchin A."/>
            <person name="Diard M."/>
            <person name="Dossat C."/>
            <person name="Karoui M.E."/>
            <person name="Frapy E."/>
            <person name="Garry L."/>
            <person name="Ghigo J.M."/>
            <person name="Gilles A.M."/>
            <person name="Johnson J."/>
            <person name="Le Bouguenec C."/>
            <person name="Lescat M."/>
            <person name="Mangenot S."/>
            <person name="Martinez-Jehanne V."/>
            <person name="Matic I."/>
            <person name="Nassif X."/>
            <person name="Oztas S."/>
            <person name="Petit M.A."/>
            <person name="Pichon C."/>
            <person name="Rouy Z."/>
            <person name="Ruf C.S."/>
            <person name="Schneider D."/>
            <person name="Tourret J."/>
            <person name="Vacherie B."/>
            <person name="Vallenet D."/>
            <person name="Medigue C."/>
            <person name="Rocha E.P.C."/>
            <person name="Denamur E."/>
        </authorList>
    </citation>
    <scope>NUCLEOTIDE SEQUENCE [LARGE SCALE GENOMIC DNA]</scope>
    <source>
        <strain>55989 / EAEC</strain>
    </source>
</reference>
<evidence type="ECO:0000255" key="1">
    <source>
        <dbReference type="HAMAP-Rule" id="MF_00180"/>
    </source>
</evidence>
<name>RIBB_ECO55</name>
<protein>
    <recommendedName>
        <fullName evidence="1">3,4-dihydroxy-2-butanone 4-phosphate synthase</fullName>
        <shortName evidence="1">DHBP synthase</shortName>
        <ecNumber evidence="1">4.1.99.12</ecNumber>
    </recommendedName>
</protein>
<gene>
    <name evidence="1" type="primary">ribB</name>
    <name type="ordered locus">EC55989_3457</name>
</gene>